<organism>
    <name type="scientific">Mannheimia succiniciproducens (strain KCTC 0769BP / MBEL55E)</name>
    <dbReference type="NCBI Taxonomy" id="221988"/>
    <lineage>
        <taxon>Bacteria</taxon>
        <taxon>Pseudomonadati</taxon>
        <taxon>Pseudomonadota</taxon>
        <taxon>Gammaproteobacteria</taxon>
        <taxon>Pasteurellales</taxon>
        <taxon>Pasteurellaceae</taxon>
        <taxon>Basfia</taxon>
    </lineage>
</organism>
<keyword id="KW-0021">Allosteric enzyme</keyword>
<keyword id="KW-0119">Carbohydrate metabolism</keyword>
<keyword id="KW-0378">Hydrolase</keyword>
<sequence>MRLIPLKNDEQVAKWSAQHIVDRINAFNPTEDHPFVLGLPTGGTPLKTYRELIKLYQAGKVSFKHVVTFNMDEYVGLPKEHPQSYHSFMYNNFFNHVDIPEKNINILDGNTPDHDAECRRYEEKIKSYGKINLFMGGVGVDGHIAFNEPASSLSSRTRIKTLTPDTLIANSRFFNNDVSQVPKYALTIGVATLLDAEEVMLLITGHQKALALQACVEGAVNHLWTVSALQLHRHSIVVCDEPATQELKVKTVKYFTELEAYAIHSVI</sequence>
<gene>
    <name evidence="1" type="primary">nagB</name>
    <name type="ordered locus">MS2205</name>
</gene>
<evidence type="ECO:0000255" key="1">
    <source>
        <dbReference type="HAMAP-Rule" id="MF_01241"/>
    </source>
</evidence>
<comment type="function">
    <text evidence="1">Catalyzes the reversible isomerization-deamination of glucosamine 6-phosphate (GlcN6P) to form fructose 6-phosphate (Fru6P) and ammonium ion.</text>
</comment>
<comment type="catalytic activity">
    <reaction evidence="1">
        <text>alpha-D-glucosamine 6-phosphate + H2O = beta-D-fructose 6-phosphate + NH4(+)</text>
        <dbReference type="Rhea" id="RHEA:12172"/>
        <dbReference type="ChEBI" id="CHEBI:15377"/>
        <dbReference type="ChEBI" id="CHEBI:28938"/>
        <dbReference type="ChEBI" id="CHEBI:57634"/>
        <dbReference type="ChEBI" id="CHEBI:75989"/>
        <dbReference type="EC" id="3.5.99.6"/>
    </reaction>
</comment>
<comment type="activity regulation">
    <text evidence="1">Allosterically activated by N-acetylglucosamine 6-phosphate (GlcNAc6P).</text>
</comment>
<comment type="pathway">
    <text evidence="1">Amino-sugar metabolism; N-acetylneuraminate degradation; D-fructose 6-phosphate from N-acetylneuraminate: step 5/5.</text>
</comment>
<comment type="subunit">
    <text evidence="1">Homohexamer.</text>
</comment>
<comment type="similarity">
    <text evidence="1">Belongs to the glucosamine/galactosamine-6-phosphate isomerase family. NagB subfamily.</text>
</comment>
<name>NAGB_MANSM</name>
<accession>Q65QE8</accession>
<proteinExistence type="inferred from homology"/>
<reference key="1">
    <citation type="journal article" date="2004" name="Nat. Biotechnol.">
        <title>The genome sequence of the capnophilic rumen bacterium Mannheimia succiniciproducens.</title>
        <authorList>
            <person name="Hong S.H."/>
            <person name="Kim J.S."/>
            <person name="Lee S.Y."/>
            <person name="In Y.H."/>
            <person name="Choi S.S."/>
            <person name="Rih J.-K."/>
            <person name="Kim C.H."/>
            <person name="Jeong H."/>
            <person name="Hur C.G."/>
            <person name="Kim J.J."/>
        </authorList>
    </citation>
    <scope>NUCLEOTIDE SEQUENCE [LARGE SCALE GENOMIC DNA]</scope>
    <source>
        <strain>KCTC 0769BP / MBEL55E</strain>
    </source>
</reference>
<protein>
    <recommendedName>
        <fullName evidence="1">Glucosamine-6-phosphate deaminase</fullName>
        <ecNumber evidence="1">3.5.99.6</ecNumber>
    </recommendedName>
    <alternativeName>
        <fullName evidence="1">GlcN6P deaminase</fullName>
        <shortName evidence="1">GNPDA</shortName>
    </alternativeName>
    <alternativeName>
        <fullName evidence="1">Glucosamine-6-phosphate isomerase</fullName>
    </alternativeName>
</protein>
<feature type="chain" id="PRO_1000067002" description="Glucosamine-6-phosphate deaminase">
    <location>
        <begin position="1"/>
        <end position="267"/>
    </location>
</feature>
<feature type="active site" description="Proton acceptor; for enolization step" evidence="1">
    <location>
        <position position="72"/>
    </location>
</feature>
<feature type="active site" description="For ring-opening step" evidence="1">
    <location>
        <position position="141"/>
    </location>
</feature>
<feature type="active site" description="Proton acceptor; for ring-opening step" evidence="1">
    <location>
        <position position="143"/>
    </location>
</feature>
<feature type="active site" description="For ring-opening step" evidence="1">
    <location>
        <position position="148"/>
    </location>
</feature>
<feature type="site" description="Part of the allosteric site" evidence="1">
    <location>
        <position position="151"/>
    </location>
</feature>
<feature type="site" description="Part of the allosteric site" evidence="1">
    <location>
        <position position="158"/>
    </location>
</feature>
<feature type="site" description="Part of the allosteric site" evidence="1">
    <location>
        <position position="160"/>
    </location>
</feature>
<feature type="site" description="Part of the allosteric site" evidence="1">
    <location>
        <position position="161"/>
    </location>
</feature>
<feature type="site" description="Part of the allosteric site" evidence="1">
    <location>
        <position position="254"/>
    </location>
</feature>
<dbReference type="EC" id="3.5.99.6" evidence="1"/>
<dbReference type="EMBL" id="AE016827">
    <property type="protein sequence ID" value="AAU38812.1"/>
    <property type="molecule type" value="Genomic_DNA"/>
</dbReference>
<dbReference type="RefSeq" id="WP_011201356.1">
    <property type="nucleotide sequence ID" value="NC_006300.1"/>
</dbReference>
<dbReference type="SMR" id="Q65QE8"/>
<dbReference type="STRING" id="221988.MS2205"/>
<dbReference type="KEGG" id="msu:MS2205"/>
<dbReference type="eggNOG" id="COG0363">
    <property type="taxonomic scope" value="Bacteria"/>
</dbReference>
<dbReference type="HOGENOM" id="CLU_049611_0_1_6"/>
<dbReference type="OrthoDB" id="9791139at2"/>
<dbReference type="UniPathway" id="UPA00629">
    <property type="reaction ID" value="UER00684"/>
</dbReference>
<dbReference type="Proteomes" id="UP000000607">
    <property type="component" value="Chromosome"/>
</dbReference>
<dbReference type="GO" id="GO:0005737">
    <property type="term" value="C:cytoplasm"/>
    <property type="evidence" value="ECO:0007669"/>
    <property type="project" value="TreeGrafter"/>
</dbReference>
<dbReference type="GO" id="GO:0004342">
    <property type="term" value="F:glucosamine-6-phosphate deaminase activity"/>
    <property type="evidence" value="ECO:0007669"/>
    <property type="project" value="UniProtKB-UniRule"/>
</dbReference>
<dbReference type="GO" id="GO:0042802">
    <property type="term" value="F:identical protein binding"/>
    <property type="evidence" value="ECO:0007669"/>
    <property type="project" value="TreeGrafter"/>
</dbReference>
<dbReference type="GO" id="GO:0005975">
    <property type="term" value="P:carbohydrate metabolic process"/>
    <property type="evidence" value="ECO:0007669"/>
    <property type="project" value="InterPro"/>
</dbReference>
<dbReference type="GO" id="GO:0006043">
    <property type="term" value="P:glucosamine catabolic process"/>
    <property type="evidence" value="ECO:0007669"/>
    <property type="project" value="TreeGrafter"/>
</dbReference>
<dbReference type="GO" id="GO:0006046">
    <property type="term" value="P:N-acetylglucosamine catabolic process"/>
    <property type="evidence" value="ECO:0007669"/>
    <property type="project" value="TreeGrafter"/>
</dbReference>
<dbReference type="GO" id="GO:0019262">
    <property type="term" value="P:N-acetylneuraminate catabolic process"/>
    <property type="evidence" value="ECO:0007669"/>
    <property type="project" value="UniProtKB-UniRule"/>
</dbReference>
<dbReference type="CDD" id="cd01399">
    <property type="entry name" value="GlcN6P_deaminase"/>
    <property type="match status" value="1"/>
</dbReference>
<dbReference type="FunFam" id="3.40.50.1360:FF:000002">
    <property type="entry name" value="Glucosamine-6-phosphate deaminase"/>
    <property type="match status" value="1"/>
</dbReference>
<dbReference type="Gene3D" id="3.40.50.1360">
    <property type="match status" value="1"/>
</dbReference>
<dbReference type="HAMAP" id="MF_01241">
    <property type="entry name" value="GlcN6P_deamin"/>
    <property type="match status" value="1"/>
</dbReference>
<dbReference type="InterPro" id="IPR006148">
    <property type="entry name" value="Glc/Gal-6P_isomerase"/>
</dbReference>
<dbReference type="InterPro" id="IPR004547">
    <property type="entry name" value="Glucosamine6P_isomerase"/>
</dbReference>
<dbReference type="InterPro" id="IPR018321">
    <property type="entry name" value="Glucosamine6P_isomerase_CS"/>
</dbReference>
<dbReference type="InterPro" id="IPR037171">
    <property type="entry name" value="NagB/RpiA_transferase-like"/>
</dbReference>
<dbReference type="NCBIfam" id="TIGR00502">
    <property type="entry name" value="nagB"/>
    <property type="match status" value="1"/>
</dbReference>
<dbReference type="PANTHER" id="PTHR11280">
    <property type="entry name" value="GLUCOSAMINE-6-PHOSPHATE ISOMERASE"/>
    <property type="match status" value="1"/>
</dbReference>
<dbReference type="PANTHER" id="PTHR11280:SF5">
    <property type="entry name" value="GLUCOSAMINE-6-PHOSPHATE ISOMERASE"/>
    <property type="match status" value="1"/>
</dbReference>
<dbReference type="Pfam" id="PF01182">
    <property type="entry name" value="Glucosamine_iso"/>
    <property type="match status" value="1"/>
</dbReference>
<dbReference type="SUPFAM" id="SSF100950">
    <property type="entry name" value="NagB/RpiA/CoA transferase-like"/>
    <property type="match status" value="1"/>
</dbReference>
<dbReference type="PROSITE" id="PS01161">
    <property type="entry name" value="GLC_GALNAC_ISOMERASE"/>
    <property type="match status" value="1"/>
</dbReference>